<protein>
    <recommendedName>
        <fullName evidence="1">Ketol-acid reductoisomerase (NADP(+))</fullName>
        <shortName evidence="1">KARI</shortName>
        <ecNumber evidence="1">1.1.1.86</ecNumber>
    </recommendedName>
    <alternativeName>
        <fullName evidence="1">Acetohydroxy-acid isomeroreductase</fullName>
        <shortName evidence="1">AHIR</shortName>
    </alternativeName>
    <alternativeName>
        <fullName evidence="1">Alpha-keto-beta-hydroxylacyl reductoisomerase</fullName>
    </alternativeName>
    <alternativeName>
        <fullName evidence="1">Ketol-acid reductoisomerase type 2</fullName>
    </alternativeName>
    <alternativeName>
        <fullName evidence="1">Ketol-acid reductoisomerase type II</fullName>
    </alternativeName>
</protein>
<name>ILVC_BUCAI</name>
<organism>
    <name type="scientific">Buchnera aphidicola subsp. Acyrthosiphon pisum (strain APS)</name>
    <name type="common">Acyrthosiphon pisum symbiotic bacterium</name>
    <dbReference type="NCBI Taxonomy" id="107806"/>
    <lineage>
        <taxon>Bacteria</taxon>
        <taxon>Pseudomonadati</taxon>
        <taxon>Pseudomonadota</taxon>
        <taxon>Gammaproteobacteria</taxon>
        <taxon>Enterobacterales</taxon>
        <taxon>Erwiniaceae</taxon>
        <taxon>Buchnera</taxon>
    </lineage>
</organism>
<gene>
    <name evidence="1" type="primary">ilvC</name>
    <name type="ordered locus">BU599</name>
</gene>
<feature type="chain" id="PRO_0000151286" description="Ketol-acid reductoisomerase (NADP(+))">
    <location>
        <begin position="1"/>
        <end position="490"/>
    </location>
</feature>
<feature type="domain" description="KARI N-terminal Rossmann" evidence="2">
    <location>
        <begin position="16"/>
        <end position="207"/>
    </location>
</feature>
<feature type="domain" description="KARI C-terminal knotted 1" evidence="3">
    <location>
        <begin position="208"/>
        <end position="343"/>
    </location>
</feature>
<feature type="domain" description="KARI C-terminal knotted 2" evidence="3">
    <location>
        <begin position="344"/>
        <end position="483"/>
    </location>
</feature>
<feature type="active site" evidence="1">
    <location>
        <position position="131"/>
    </location>
</feature>
<feature type="binding site" evidence="1">
    <location>
        <begin position="44"/>
        <end position="47"/>
    </location>
    <ligand>
        <name>NADP(+)</name>
        <dbReference type="ChEBI" id="CHEBI:58349"/>
    </ligand>
</feature>
<feature type="binding site" evidence="1">
    <location>
        <position position="67"/>
    </location>
    <ligand>
        <name>NADP(+)</name>
        <dbReference type="ChEBI" id="CHEBI:58349"/>
    </ligand>
</feature>
<feature type="binding site" evidence="1">
    <location>
        <position position="77"/>
    </location>
    <ligand>
        <name>NADP(+)</name>
        <dbReference type="ChEBI" id="CHEBI:58349"/>
    </ligand>
</feature>
<feature type="binding site" evidence="1">
    <location>
        <begin position="107"/>
        <end position="109"/>
    </location>
    <ligand>
        <name>NADP(+)</name>
        <dbReference type="ChEBI" id="CHEBI:58349"/>
    </ligand>
</feature>
<feature type="binding site" evidence="1">
    <location>
        <position position="157"/>
    </location>
    <ligand>
        <name>NADP(+)</name>
        <dbReference type="ChEBI" id="CHEBI:58349"/>
    </ligand>
</feature>
<feature type="binding site" evidence="1">
    <location>
        <position position="216"/>
    </location>
    <ligand>
        <name>Mg(2+)</name>
        <dbReference type="ChEBI" id="CHEBI:18420"/>
        <label>1</label>
    </ligand>
</feature>
<feature type="binding site" evidence="1">
    <location>
        <position position="216"/>
    </location>
    <ligand>
        <name>Mg(2+)</name>
        <dbReference type="ChEBI" id="CHEBI:18420"/>
        <label>2</label>
    </ligand>
</feature>
<feature type="binding site" evidence="1">
    <location>
        <position position="220"/>
    </location>
    <ligand>
        <name>Mg(2+)</name>
        <dbReference type="ChEBI" id="CHEBI:18420"/>
        <label>1</label>
    </ligand>
</feature>
<feature type="binding site" evidence="1">
    <location>
        <position position="388"/>
    </location>
    <ligand>
        <name>Mg(2+)</name>
        <dbReference type="ChEBI" id="CHEBI:18420"/>
        <label>2</label>
    </ligand>
</feature>
<feature type="binding site" evidence="1">
    <location>
        <position position="392"/>
    </location>
    <ligand>
        <name>Mg(2+)</name>
        <dbReference type="ChEBI" id="CHEBI:18420"/>
        <label>2</label>
    </ligand>
</feature>
<feature type="binding site" evidence="1">
    <location>
        <position position="413"/>
    </location>
    <ligand>
        <name>substrate</name>
    </ligand>
</feature>
<comment type="function">
    <text evidence="1">Involved in the biosynthesis of branched-chain amino acids (BCAA). Catalyzes an alkyl-migration followed by a ketol-acid reduction of (S)-2-acetolactate (S2AL) to yield (R)-2,3-dihydroxy-isovalerate. In the isomerase reaction, S2AL is rearranged via a Mg-dependent methyl migration to produce 3-hydroxy-3-methyl-2-ketobutyrate (HMKB). In the reductase reaction, this 2-ketoacid undergoes a metal-dependent reduction by NADPH to yield (R)-2,3-dihydroxy-isovalerate.</text>
</comment>
<comment type="catalytic activity">
    <reaction evidence="1">
        <text>(2R)-2,3-dihydroxy-3-methylbutanoate + NADP(+) = (2S)-2-acetolactate + NADPH + H(+)</text>
        <dbReference type="Rhea" id="RHEA:22068"/>
        <dbReference type="ChEBI" id="CHEBI:15378"/>
        <dbReference type="ChEBI" id="CHEBI:49072"/>
        <dbReference type="ChEBI" id="CHEBI:57783"/>
        <dbReference type="ChEBI" id="CHEBI:58349"/>
        <dbReference type="ChEBI" id="CHEBI:58476"/>
        <dbReference type="EC" id="1.1.1.86"/>
    </reaction>
</comment>
<comment type="catalytic activity">
    <reaction evidence="1">
        <text>(2R,3R)-2,3-dihydroxy-3-methylpentanoate + NADP(+) = (S)-2-ethyl-2-hydroxy-3-oxobutanoate + NADPH + H(+)</text>
        <dbReference type="Rhea" id="RHEA:13493"/>
        <dbReference type="ChEBI" id="CHEBI:15378"/>
        <dbReference type="ChEBI" id="CHEBI:49256"/>
        <dbReference type="ChEBI" id="CHEBI:49258"/>
        <dbReference type="ChEBI" id="CHEBI:57783"/>
        <dbReference type="ChEBI" id="CHEBI:58349"/>
        <dbReference type="EC" id="1.1.1.86"/>
    </reaction>
</comment>
<comment type="cofactor">
    <cofactor evidence="1">
        <name>Mg(2+)</name>
        <dbReference type="ChEBI" id="CHEBI:18420"/>
    </cofactor>
    <text evidence="1">Binds 2 magnesium ions per subunit.</text>
</comment>
<comment type="pathway">
    <text evidence="1">Amino-acid biosynthesis; L-isoleucine biosynthesis; L-isoleucine from 2-oxobutanoate: step 2/4.</text>
</comment>
<comment type="pathway">
    <text evidence="1">Amino-acid biosynthesis; L-valine biosynthesis; L-valine from pyruvate: step 2/4.</text>
</comment>
<comment type="similarity">
    <text evidence="1">Belongs to the ketol-acid reductoisomerase family.</text>
</comment>
<evidence type="ECO:0000255" key="1">
    <source>
        <dbReference type="HAMAP-Rule" id="MF_00435"/>
    </source>
</evidence>
<evidence type="ECO:0000255" key="2">
    <source>
        <dbReference type="PROSITE-ProRule" id="PRU01197"/>
    </source>
</evidence>
<evidence type="ECO:0000255" key="3">
    <source>
        <dbReference type="PROSITE-ProRule" id="PRU01198"/>
    </source>
</evidence>
<dbReference type="EC" id="1.1.1.86" evidence="1"/>
<dbReference type="EMBL" id="BA000003">
    <property type="protein sequence ID" value="BAB13284.1"/>
    <property type="molecule type" value="Genomic_DNA"/>
</dbReference>
<dbReference type="EMBL" id="AF217558">
    <property type="protein sequence ID" value="AAK01029.1"/>
    <property type="molecule type" value="Genomic_DNA"/>
</dbReference>
<dbReference type="RefSeq" id="NP_240398.1">
    <property type="nucleotide sequence ID" value="NC_002528.1"/>
</dbReference>
<dbReference type="SMR" id="P57655"/>
<dbReference type="STRING" id="563178.BUAP5A_591"/>
<dbReference type="EnsemblBacteria" id="BAB13284">
    <property type="protein sequence ID" value="BAB13284"/>
    <property type="gene ID" value="BAB13284"/>
</dbReference>
<dbReference type="KEGG" id="buc:BU599"/>
<dbReference type="PATRIC" id="fig|107806.10.peg.602"/>
<dbReference type="eggNOG" id="COG0059">
    <property type="taxonomic scope" value="Bacteria"/>
</dbReference>
<dbReference type="HOGENOM" id="CLU_551905_0_0_6"/>
<dbReference type="UniPathway" id="UPA00047">
    <property type="reaction ID" value="UER00056"/>
</dbReference>
<dbReference type="UniPathway" id="UPA00049">
    <property type="reaction ID" value="UER00060"/>
</dbReference>
<dbReference type="Proteomes" id="UP000001806">
    <property type="component" value="Chromosome"/>
</dbReference>
<dbReference type="GO" id="GO:0005829">
    <property type="term" value="C:cytosol"/>
    <property type="evidence" value="ECO:0007669"/>
    <property type="project" value="TreeGrafter"/>
</dbReference>
<dbReference type="GO" id="GO:0004455">
    <property type="term" value="F:ketol-acid reductoisomerase activity"/>
    <property type="evidence" value="ECO:0007669"/>
    <property type="project" value="UniProtKB-UniRule"/>
</dbReference>
<dbReference type="GO" id="GO:0000287">
    <property type="term" value="F:magnesium ion binding"/>
    <property type="evidence" value="ECO:0007669"/>
    <property type="project" value="UniProtKB-UniRule"/>
</dbReference>
<dbReference type="GO" id="GO:0009097">
    <property type="term" value="P:isoleucine biosynthetic process"/>
    <property type="evidence" value="ECO:0007669"/>
    <property type="project" value="UniProtKB-UniRule"/>
</dbReference>
<dbReference type="GO" id="GO:0009099">
    <property type="term" value="P:L-valine biosynthetic process"/>
    <property type="evidence" value="ECO:0007669"/>
    <property type="project" value="UniProtKB-UniRule"/>
</dbReference>
<dbReference type="Gene3D" id="1.10.1040.10">
    <property type="entry name" value="N-(1-d-carboxylethyl)-l-norvaline Dehydrogenase, domain 2"/>
    <property type="match status" value="1"/>
</dbReference>
<dbReference type="Gene3D" id="3.40.50.720">
    <property type="entry name" value="NAD(P)-binding Rossmann-like Domain"/>
    <property type="match status" value="1"/>
</dbReference>
<dbReference type="HAMAP" id="MF_00435">
    <property type="entry name" value="IlvC"/>
    <property type="match status" value="1"/>
</dbReference>
<dbReference type="InterPro" id="IPR008927">
    <property type="entry name" value="6-PGluconate_DH-like_C_sf"/>
</dbReference>
<dbReference type="InterPro" id="IPR013328">
    <property type="entry name" value="6PGD_dom2"/>
</dbReference>
<dbReference type="InterPro" id="IPR013023">
    <property type="entry name" value="KARI"/>
</dbReference>
<dbReference type="InterPro" id="IPR000506">
    <property type="entry name" value="KARI_C"/>
</dbReference>
<dbReference type="InterPro" id="IPR013116">
    <property type="entry name" value="KARI_N"/>
</dbReference>
<dbReference type="InterPro" id="IPR036291">
    <property type="entry name" value="NAD(P)-bd_dom_sf"/>
</dbReference>
<dbReference type="NCBIfam" id="TIGR00465">
    <property type="entry name" value="ilvC"/>
    <property type="match status" value="1"/>
</dbReference>
<dbReference type="NCBIfam" id="NF003557">
    <property type="entry name" value="PRK05225.1"/>
    <property type="match status" value="1"/>
</dbReference>
<dbReference type="PANTHER" id="PTHR21371">
    <property type="entry name" value="KETOL-ACID REDUCTOISOMERASE, MITOCHONDRIAL"/>
    <property type="match status" value="1"/>
</dbReference>
<dbReference type="PANTHER" id="PTHR21371:SF1">
    <property type="entry name" value="KETOL-ACID REDUCTOISOMERASE, MITOCHONDRIAL"/>
    <property type="match status" value="1"/>
</dbReference>
<dbReference type="Pfam" id="PF01450">
    <property type="entry name" value="KARI_C"/>
    <property type="match status" value="2"/>
</dbReference>
<dbReference type="Pfam" id="PF07991">
    <property type="entry name" value="KARI_N"/>
    <property type="match status" value="1"/>
</dbReference>
<dbReference type="SUPFAM" id="SSF48179">
    <property type="entry name" value="6-phosphogluconate dehydrogenase C-terminal domain-like"/>
    <property type="match status" value="2"/>
</dbReference>
<dbReference type="SUPFAM" id="SSF51735">
    <property type="entry name" value="NAD(P)-binding Rossmann-fold domains"/>
    <property type="match status" value="1"/>
</dbReference>
<dbReference type="PROSITE" id="PS51851">
    <property type="entry name" value="KARI_C"/>
    <property type="match status" value="2"/>
</dbReference>
<dbReference type="PROSITE" id="PS51850">
    <property type="entry name" value="KARI_N"/>
    <property type="match status" value="1"/>
</dbReference>
<keyword id="KW-0028">Amino-acid biosynthesis</keyword>
<keyword id="KW-0100">Branched-chain amino acid biosynthesis</keyword>
<keyword id="KW-0460">Magnesium</keyword>
<keyword id="KW-0479">Metal-binding</keyword>
<keyword id="KW-0521">NADP</keyword>
<keyword id="KW-0560">Oxidoreductase</keyword>
<keyword id="KW-1185">Reference proteome</keyword>
<keyword id="KW-0677">Repeat</keyword>
<accession>P57655</accession>
<accession>Q9AQ95</accession>
<sequence length="490" mass="55828">MNYFNTLNFTQKINQINKCRFMKKEEFNKKNDILKNKNIVIVGCGAQGLNQGLNMRDAGLNISYALKKNSIANKNQSWINAIENNFKVDDYDALIPDADLVINLTPDKQHHSVIKKLQKLMKKNAVLGYSHGFNIVEFGEKIRKDITVIMVAPKCPGTEVREEYKRGFGVPTLIAVHHENDINKIGLEVAKAWAFSTGGHRAGVLESSFIAEVKSDLMGEQTILCGMLQTASLLCYEKLITEKCNPAYSAKLIQNGWETITESLKHGGITLMMDRLSNSSKIRAYKLSKEIKKILSPLFQKHMDDIISGEFSNEMMKDWENQDLKLLNWRYKTKNTSFETAPVYNEKIPEQEYYDHGILMIAILKSGIELSFEKMIETGIKEESAYYESLHELPLIANTIARKKLYEMNKVISDTAEYGSYLFSESAYPILKEFISTLNKSDLGCALSHQSVNNIELYRINQKIQNHPIEIIGCTLRNYMKKMKAITVAK</sequence>
<reference key="1">
    <citation type="journal article" date="2000" name="Nature">
        <title>Genome sequence of the endocellular bacterial symbiont of aphids Buchnera sp. APS.</title>
        <authorList>
            <person name="Shigenobu S."/>
            <person name="Watanabe H."/>
            <person name="Hattori M."/>
            <person name="Sakaki Y."/>
            <person name="Ishikawa H."/>
        </authorList>
    </citation>
    <scope>NUCLEOTIDE SEQUENCE [LARGE SCALE GENOMIC DNA]</scope>
    <source>
        <strain>APS</strain>
    </source>
</reference>
<reference key="2">
    <citation type="submission" date="1999-12" db="EMBL/GenBank/DDBJ databases">
        <title>Accelerated evolutionary rates at biosynthetic loci of Buchnera-Uroleucon.</title>
        <authorList>
            <person name="Wernegreen J.J."/>
            <person name="Moran N.A."/>
        </authorList>
    </citation>
    <scope>NUCLEOTIDE SEQUENCE [GENOMIC DNA] OF 67-412</scope>
</reference>
<proteinExistence type="inferred from homology"/>